<comment type="function">
    <text evidence="1">Catalyzes the synthesis of GMP from XMP.</text>
</comment>
<comment type="catalytic activity">
    <reaction evidence="1">
        <text>XMP + L-glutamine + ATP + H2O = GMP + L-glutamate + AMP + diphosphate + 2 H(+)</text>
        <dbReference type="Rhea" id="RHEA:11680"/>
        <dbReference type="ChEBI" id="CHEBI:15377"/>
        <dbReference type="ChEBI" id="CHEBI:15378"/>
        <dbReference type="ChEBI" id="CHEBI:29985"/>
        <dbReference type="ChEBI" id="CHEBI:30616"/>
        <dbReference type="ChEBI" id="CHEBI:33019"/>
        <dbReference type="ChEBI" id="CHEBI:57464"/>
        <dbReference type="ChEBI" id="CHEBI:58115"/>
        <dbReference type="ChEBI" id="CHEBI:58359"/>
        <dbReference type="ChEBI" id="CHEBI:456215"/>
        <dbReference type="EC" id="6.3.5.2"/>
    </reaction>
</comment>
<comment type="pathway">
    <text evidence="1">Purine metabolism; GMP biosynthesis; GMP from XMP (L-Gln route): step 1/1.</text>
</comment>
<comment type="subunit">
    <text evidence="1">Homodimer.</text>
</comment>
<keyword id="KW-0067">ATP-binding</keyword>
<keyword id="KW-0315">Glutamine amidotransferase</keyword>
<keyword id="KW-0332">GMP biosynthesis</keyword>
<keyword id="KW-0436">Ligase</keyword>
<keyword id="KW-0547">Nucleotide-binding</keyword>
<keyword id="KW-0658">Purine biosynthesis</keyword>
<sequence length="512" mass="57307">MKKQHDTIIVLDFGSQYNQLIARRIREFGVYSELHPHTITAEEIKEINPKGIIFSGGPNSVYGEGALHCDEKIFDLGLPIFGICYGMQLMTQKFGGKVERANHREYGKAVLKVENESKLYANLPEEQVVWMSHGDLVTGLPEGFVVDATSESCPIAGMSNEAKNLYGVQFHPEVRHSEHGNDLIKNFVFGVCGCSEGWNMENFIEVELEKIRETVGDKKVLCALSGGVDSSVVAVLIHKAIGDQLTCIFVDHGLLRKGEAEGVMKTFSEGFHMNVIKVDAKERFMNKLKGVEDPEQKRKIIGNEFIYVFDDEASKLEGMDFLAQGTLYTDIVESGTATAQTIKSHHNVGGLPEDMQFKLIEPLNTLFKDEVRVLGSELGIPDEIVWRQPFPGPGLGIRVLGEITEEKLEIVRESDAILREEIIKAGLDREIWQYFTALPGMRSVGVMGDERTYDYTVGIRAVTSIDGMTADWARIPWDVLEKISVRIVNEVKHVNRIVYDVTSKPPATIEWE</sequence>
<feature type="chain" id="PRO_0000140090" description="GMP synthase [glutamine-hydrolyzing]">
    <location>
        <begin position="1"/>
        <end position="512"/>
    </location>
</feature>
<feature type="domain" description="Glutamine amidotransferase type-1" evidence="1">
    <location>
        <begin position="7"/>
        <end position="197"/>
    </location>
</feature>
<feature type="domain" description="GMPS ATP-PPase" evidence="1">
    <location>
        <begin position="198"/>
        <end position="387"/>
    </location>
</feature>
<feature type="active site" description="Nucleophile" evidence="1">
    <location>
        <position position="84"/>
    </location>
</feature>
<feature type="active site" evidence="1">
    <location>
        <position position="171"/>
    </location>
</feature>
<feature type="active site" evidence="1">
    <location>
        <position position="173"/>
    </location>
</feature>
<feature type="binding site" evidence="1">
    <location>
        <begin position="225"/>
        <end position="231"/>
    </location>
    <ligand>
        <name>ATP</name>
        <dbReference type="ChEBI" id="CHEBI:30616"/>
    </ligand>
</feature>
<accession>Q73ER7</accession>
<protein>
    <recommendedName>
        <fullName evidence="1">GMP synthase [glutamine-hydrolyzing]</fullName>
        <ecNumber evidence="1">6.3.5.2</ecNumber>
    </recommendedName>
    <alternativeName>
        <fullName evidence="1">GMP synthetase</fullName>
    </alternativeName>
    <alternativeName>
        <fullName evidence="1">Glutamine amidotransferase</fullName>
    </alternativeName>
</protein>
<organism>
    <name type="scientific">Bacillus cereus (strain ATCC 10987 / NRS 248)</name>
    <dbReference type="NCBI Taxonomy" id="222523"/>
    <lineage>
        <taxon>Bacteria</taxon>
        <taxon>Bacillati</taxon>
        <taxon>Bacillota</taxon>
        <taxon>Bacilli</taxon>
        <taxon>Bacillales</taxon>
        <taxon>Bacillaceae</taxon>
        <taxon>Bacillus</taxon>
        <taxon>Bacillus cereus group</taxon>
    </lineage>
</organism>
<reference key="1">
    <citation type="journal article" date="2004" name="Nucleic Acids Res.">
        <title>The genome sequence of Bacillus cereus ATCC 10987 reveals metabolic adaptations and a large plasmid related to Bacillus anthracis pXO1.</title>
        <authorList>
            <person name="Rasko D.A."/>
            <person name="Ravel J."/>
            <person name="Oekstad O.A."/>
            <person name="Helgason E."/>
            <person name="Cer R.Z."/>
            <person name="Jiang L."/>
            <person name="Shores K.A."/>
            <person name="Fouts D.E."/>
            <person name="Tourasse N.J."/>
            <person name="Angiuoli S.V."/>
            <person name="Kolonay J.F."/>
            <person name="Nelson W.C."/>
            <person name="Kolstoe A.-B."/>
            <person name="Fraser C.M."/>
            <person name="Read T.D."/>
        </authorList>
    </citation>
    <scope>NUCLEOTIDE SEQUENCE [LARGE SCALE GENOMIC DNA]</scope>
    <source>
        <strain>ATCC 10987 / NRS 248</strain>
    </source>
</reference>
<dbReference type="EC" id="6.3.5.2" evidence="1"/>
<dbReference type="EMBL" id="AE017194">
    <property type="protein sequence ID" value="AAS39227.1"/>
    <property type="molecule type" value="Genomic_DNA"/>
</dbReference>
<dbReference type="SMR" id="Q73ER7"/>
<dbReference type="MEROPS" id="C26.957"/>
<dbReference type="KEGG" id="bca:BCE_0291"/>
<dbReference type="HOGENOM" id="CLU_014340_0_5_9"/>
<dbReference type="UniPathway" id="UPA00189">
    <property type="reaction ID" value="UER00296"/>
</dbReference>
<dbReference type="Proteomes" id="UP000002527">
    <property type="component" value="Chromosome"/>
</dbReference>
<dbReference type="GO" id="GO:0005829">
    <property type="term" value="C:cytosol"/>
    <property type="evidence" value="ECO:0007669"/>
    <property type="project" value="TreeGrafter"/>
</dbReference>
<dbReference type="GO" id="GO:0005524">
    <property type="term" value="F:ATP binding"/>
    <property type="evidence" value="ECO:0007669"/>
    <property type="project" value="UniProtKB-UniRule"/>
</dbReference>
<dbReference type="GO" id="GO:0003921">
    <property type="term" value="F:GMP synthase activity"/>
    <property type="evidence" value="ECO:0007669"/>
    <property type="project" value="InterPro"/>
</dbReference>
<dbReference type="CDD" id="cd01742">
    <property type="entry name" value="GATase1_GMP_Synthase"/>
    <property type="match status" value="1"/>
</dbReference>
<dbReference type="CDD" id="cd01997">
    <property type="entry name" value="GMP_synthase_C"/>
    <property type="match status" value="1"/>
</dbReference>
<dbReference type="FunFam" id="3.30.300.10:FF:000002">
    <property type="entry name" value="GMP synthase [glutamine-hydrolyzing]"/>
    <property type="match status" value="1"/>
</dbReference>
<dbReference type="FunFam" id="3.40.50.620:FF:000001">
    <property type="entry name" value="GMP synthase [glutamine-hydrolyzing]"/>
    <property type="match status" value="1"/>
</dbReference>
<dbReference type="FunFam" id="3.40.50.880:FF:000001">
    <property type="entry name" value="GMP synthase [glutamine-hydrolyzing]"/>
    <property type="match status" value="1"/>
</dbReference>
<dbReference type="Gene3D" id="3.30.300.10">
    <property type="match status" value="1"/>
</dbReference>
<dbReference type="Gene3D" id="3.40.50.880">
    <property type="match status" value="1"/>
</dbReference>
<dbReference type="Gene3D" id="3.40.50.620">
    <property type="entry name" value="HUPs"/>
    <property type="match status" value="1"/>
</dbReference>
<dbReference type="HAMAP" id="MF_00344">
    <property type="entry name" value="GMP_synthase"/>
    <property type="match status" value="1"/>
</dbReference>
<dbReference type="InterPro" id="IPR029062">
    <property type="entry name" value="Class_I_gatase-like"/>
</dbReference>
<dbReference type="InterPro" id="IPR017926">
    <property type="entry name" value="GATASE"/>
</dbReference>
<dbReference type="InterPro" id="IPR001674">
    <property type="entry name" value="GMP_synth_C"/>
</dbReference>
<dbReference type="InterPro" id="IPR004739">
    <property type="entry name" value="GMP_synth_GATase"/>
</dbReference>
<dbReference type="InterPro" id="IPR022955">
    <property type="entry name" value="GMP_synthase"/>
</dbReference>
<dbReference type="InterPro" id="IPR025777">
    <property type="entry name" value="GMPS_ATP_PPase_dom"/>
</dbReference>
<dbReference type="InterPro" id="IPR022310">
    <property type="entry name" value="NAD/GMP_synthase"/>
</dbReference>
<dbReference type="InterPro" id="IPR014729">
    <property type="entry name" value="Rossmann-like_a/b/a_fold"/>
</dbReference>
<dbReference type="NCBIfam" id="TIGR00884">
    <property type="entry name" value="guaA_Cterm"/>
    <property type="match status" value="1"/>
</dbReference>
<dbReference type="NCBIfam" id="TIGR00888">
    <property type="entry name" value="guaA_Nterm"/>
    <property type="match status" value="1"/>
</dbReference>
<dbReference type="NCBIfam" id="NF000848">
    <property type="entry name" value="PRK00074.1"/>
    <property type="match status" value="1"/>
</dbReference>
<dbReference type="PANTHER" id="PTHR11922:SF2">
    <property type="entry name" value="GMP SYNTHASE [GLUTAMINE-HYDROLYZING]"/>
    <property type="match status" value="1"/>
</dbReference>
<dbReference type="PANTHER" id="PTHR11922">
    <property type="entry name" value="GMP SYNTHASE-RELATED"/>
    <property type="match status" value="1"/>
</dbReference>
<dbReference type="Pfam" id="PF00117">
    <property type="entry name" value="GATase"/>
    <property type="match status" value="1"/>
</dbReference>
<dbReference type="Pfam" id="PF00958">
    <property type="entry name" value="GMP_synt_C"/>
    <property type="match status" value="1"/>
</dbReference>
<dbReference type="Pfam" id="PF02540">
    <property type="entry name" value="NAD_synthase"/>
    <property type="match status" value="1"/>
</dbReference>
<dbReference type="PRINTS" id="PR00097">
    <property type="entry name" value="ANTSNTHASEII"/>
</dbReference>
<dbReference type="PRINTS" id="PR00099">
    <property type="entry name" value="CPSGATASE"/>
</dbReference>
<dbReference type="PRINTS" id="PR00096">
    <property type="entry name" value="GATASE"/>
</dbReference>
<dbReference type="SUPFAM" id="SSF52402">
    <property type="entry name" value="Adenine nucleotide alpha hydrolases-like"/>
    <property type="match status" value="1"/>
</dbReference>
<dbReference type="SUPFAM" id="SSF52317">
    <property type="entry name" value="Class I glutamine amidotransferase-like"/>
    <property type="match status" value="1"/>
</dbReference>
<dbReference type="SUPFAM" id="SSF54810">
    <property type="entry name" value="GMP synthetase C-terminal dimerisation domain"/>
    <property type="match status" value="1"/>
</dbReference>
<dbReference type="PROSITE" id="PS51273">
    <property type="entry name" value="GATASE_TYPE_1"/>
    <property type="match status" value="1"/>
</dbReference>
<dbReference type="PROSITE" id="PS51553">
    <property type="entry name" value="GMPS_ATP_PPASE"/>
    <property type="match status" value="1"/>
</dbReference>
<proteinExistence type="inferred from homology"/>
<evidence type="ECO:0000255" key="1">
    <source>
        <dbReference type="HAMAP-Rule" id="MF_00344"/>
    </source>
</evidence>
<gene>
    <name evidence="1" type="primary">guaA</name>
    <name type="ordered locus">BCE_0291</name>
</gene>
<name>GUAA_BACC1</name>